<protein>
    <recommendedName>
        <fullName evidence="1">Iron-sulfur cluster assembly protein CyaY</fullName>
    </recommendedName>
</protein>
<organism>
    <name type="scientific">Pseudomonas putida (strain W619)</name>
    <dbReference type="NCBI Taxonomy" id="390235"/>
    <lineage>
        <taxon>Bacteria</taxon>
        <taxon>Pseudomonadati</taxon>
        <taxon>Pseudomonadota</taxon>
        <taxon>Gammaproteobacteria</taxon>
        <taxon>Pseudomonadales</taxon>
        <taxon>Pseudomonadaceae</taxon>
        <taxon>Pseudomonas</taxon>
    </lineage>
</organism>
<comment type="function">
    <text evidence="1">Involved in iron-sulfur (Fe-S) cluster assembly. May act as a regulator of Fe-S biogenesis.</text>
</comment>
<comment type="similarity">
    <text evidence="1">Belongs to the frataxin family.</text>
</comment>
<proteinExistence type="inferred from homology"/>
<keyword id="KW-0408">Iron</keyword>
<keyword id="KW-0479">Metal-binding</keyword>
<reference key="1">
    <citation type="submission" date="2008-02" db="EMBL/GenBank/DDBJ databases">
        <title>Complete sequence of Pseudomonas putida W619.</title>
        <authorList>
            <person name="Copeland A."/>
            <person name="Lucas S."/>
            <person name="Lapidus A."/>
            <person name="Barry K."/>
            <person name="Detter J.C."/>
            <person name="Glavina del Rio T."/>
            <person name="Dalin E."/>
            <person name="Tice H."/>
            <person name="Pitluck S."/>
            <person name="Chain P."/>
            <person name="Malfatti S."/>
            <person name="Shin M."/>
            <person name="Vergez L."/>
            <person name="Schmutz J."/>
            <person name="Larimer F."/>
            <person name="Land M."/>
            <person name="Hauser L."/>
            <person name="Kyrpides N."/>
            <person name="Kim E."/>
            <person name="Taghavi S."/>
            <person name="Vangronsveld D."/>
            <person name="van der Lelie D."/>
            <person name="Richardson P."/>
        </authorList>
    </citation>
    <scope>NUCLEOTIDE SEQUENCE [LARGE SCALE GENOMIC DNA]</scope>
    <source>
        <strain>W619</strain>
    </source>
</reference>
<feature type="chain" id="PRO_1000096249" description="Iron-sulfur cluster assembly protein CyaY">
    <location>
        <begin position="1"/>
        <end position="110"/>
    </location>
</feature>
<sequence length="110" mass="12690">MSLSEARFHDLVDATQQALEDLFDESGLDLDMENSAGVLTIKFDNGSQLIFSRQEPLRQLWLADRSGGFHFDYDEESGKWVCEKSEELLGEMLERIVWERAGEKLDFDEI</sequence>
<accession>B1J1U3</accession>
<name>CYAY_PSEPW</name>
<gene>
    <name evidence="1" type="primary">cyaY</name>
    <name type="ordered locus">PputW619_0247</name>
</gene>
<evidence type="ECO:0000255" key="1">
    <source>
        <dbReference type="HAMAP-Rule" id="MF_00142"/>
    </source>
</evidence>
<dbReference type="EMBL" id="CP000949">
    <property type="protein sequence ID" value="ACA70753.1"/>
    <property type="molecule type" value="Genomic_DNA"/>
</dbReference>
<dbReference type="SMR" id="B1J1U3"/>
<dbReference type="STRING" id="390235.PputW619_0247"/>
<dbReference type="KEGG" id="ppw:PputW619_0247"/>
<dbReference type="eggNOG" id="COG1965">
    <property type="taxonomic scope" value="Bacteria"/>
</dbReference>
<dbReference type="HOGENOM" id="CLU_080880_3_0_6"/>
<dbReference type="OrthoDB" id="285675at2"/>
<dbReference type="GO" id="GO:0005829">
    <property type="term" value="C:cytosol"/>
    <property type="evidence" value="ECO:0007669"/>
    <property type="project" value="TreeGrafter"/>
</dbReference>
<dbReference type="GO" id="GO:0008199">
    <property type="term" value="F:ferric iron binding"/>
    <property type="evidence" value="ECO:0007669"/>
    <property type="project" value="InterPro"/>
</dbReference>
<dbReference type="GO" id="GO:0008198">
    <property type="term" value="F:ferrous iron binding"/>
    <property type="evidence" value="ECO:0007669"/>
    <property type="project" value="TreeGrafter"/>
</dbReference>
<dbReference type="GO" id="GO:0016226">
    <property type="term" value="P:iron-sulfur cluster assembly"/>
    <property type="evidence" value="ECO:0007669"/>
    <property type="project" value="UniProtKB-UniRule"/>
</dbReference>
<dbReference type="Gene3D" id="3.30.920.10">
    <property type="entry name" value="Frataxin/CyaY"/>
    <property type="match status" value="1"/>
</dbReference>
<dbReference type="HAMAP" id="MF_00142">
    <property type="entry name" value="CyaY"/>
    <property type="match status" value="1"/>
</dbReference>
<dbReference type="InterPro" id="IPR047584">
    <property type="entry name" value="CyaY"/>
</dbReference>
<dbReference type="InterPro" id="IPR002908">
    <property type="entry name" value="Frataxin/CyaY"/>
</dbReference>
<dbReference type="InterPro" id="IPR036524">
    <property type="entry name" value="Frataxin/CyaY_sf"/>
</dbReference>
<dbReference type="InterPro" id="IPR020895">
    <property type="entry name" value="Frataxin_CS"/>
</dbReference>
<dbReference type="NCBIfam" id="TIGR03421">
    <property type="entry name" value="FeS_CyaY"/>
    <property type="match status" value="1"/>
</dbReference>
<dbReference type="PANTHER" id="PTHR16821">
    <property type="entry name" value="FRATAXIN"/>
    <property type="match status" value="1"/>
</dbReference>
<dbReference type="PANTHER" id="PTHR16821:SF2">
    <property type="entry name" value="FRATAXIN, MITOCHONDRIAL"/>
    <property type="match status" value="1"/>
</dbReference>
<dbReference type="Pfam" id="PF01491">
    <property type="entry name" value="Frataxin_Cyay"/>
    <property type="match status" value="1"/>
</dbReference>
<dbReference type="SMART" id="SM01219">
    <property type="entry name" value="Frataxin_Cyay"/>
    <property type="match status" value="1"/>
</dbReference>
<dbReference type="SUPFAM" id="SSF55387">
    <property type="entry name" value="Frataxin/Nqo15-like"/>
    <property type="match status" value="1"/>
</dbReference>
<dbReference type="PROSITE" id="PS01344">
    <property type="entry name" value="FRATAXIN_1"/>
    <property type="match status" value="1"/>
</dbReference>
<dbReference type="PROSITE" id="PS50810">
    <property type="entry name" value="FRATAXIN_2"/>
    <property type="match status" value="1"/>
</dbReference>